<name>MSRQ_SALAR</name>
<feature type="chain" id="PRO_1000085531" description="Protein-methionine-sulfoxide reductase heme-binding subunit MsrQ">
    <location>
        <begin position="1"/>
        <end position="199"/>
    </location>
</feature>
<feature type="transmembrane region" description="Helical" evidence="1">
    <location>
        <begin position="8"/>
        <end position="28"/>
    </location>
</feature>
<feature type="transmembrane region" description="Helical" evidence="1">
    <location>
        <begin position="82"/>
        <end position="102"/>
    </location>
</feature>
<feature type="transmembrane region" description="Helical" evidence="1">
    <location>
        <begin position="116"/>
        <end position="136"/>
    </location>
</feature>
<feature type="transmembrane region" description="Helical" evidence="1">
    <location>
        <begin position="153"/>
        <end position="173"/>
    </location>
</feature>
<protein>
    <recommendedName>
        <fullName evidence="1">Protein-methionine-sulfoxide reductase heme-binding subunit MsrQ</fullName>
    </recommendedName>
    <alternativeName>
        <fullName evidence="1">Flavocytochrome MsrQ</fullName>
    </alternativeName>
</protein>
<dbReference type="EMBL" id="CP000880">
    <property type="protein sequence ID" value="ABX24038.1"/>
    <property type="molecule type" value="Genomic_DNA"/>
</dbReference>
<dbReference type="STRING" id="41514.SARI_04255"/>
<dbReference type="KEGG" id="ses:SARI_04255"/>
<dbReference type="HOGENOM" id="CLU_080662_1_0_6"/>
<dbReference type="Proteomes" id="UP000002084">
    <property type="component" value="Chromosome"/>
</dbReference>
<dbReference type="GO" id="GO:0005886">
    <property type="term" value="C:plasma membrane"/>
    <property type="evidence" value="ECO:0007669"/>
    <property type="project" value="UniProtKB-SubCell"/>
</dbReference>
<dbReference type="GO" id="GO:0009055">
    <property type="term" value="F:electron transfer activity"/>
    <property type="evidence" value="ECO:0007669"/>
    <property type="project" value="UniProtKB-UniRule"/>
</dbReference>
<dbReference type="GO" id="GO:0010181">
    <property type="term" value="F:FMN binding"/>
    <property type="evidence" value="ECO:0007669"/>
    <property type="project" value="UniProtKB-UniRule"/>
</dbReference>
<dbReference type="GO" id="GO:0020037">
    <property type="term" value="F:heme binding"/>
    <property type="evidence" value="ECO:0007669"/>
    <property type="project" value="UniProtKB-UniRule"/>
</dbReference>
<dbReference type="GO" id="GO:0046872">
    <property type="term" value="F:metal ion binding"/>
    <property type="evidence" value="ECO:0007669"/>
    <property type="project" value="UniProtKB-KW"/>
</dbReference>
<dbReference type="GO" id="GO:0016679">
    <property type="term" value="F:oxidoreductase activity, acting on diphenols and related substances as donors"/>
    <property type="evidence" value="ECO:0007669"/>
    <property type="project" value="TreeGrafter"/>
</dbReference>
<dbReference type="GO" id="GO:0030091">
    <property type="term" value="P:protein repair"/>
    <property type="evidence" value="ECO:0007669"/>
    <property type="project" value="UniProtKB-UniRule"/>
</dbReference>
<dbReference type="HAMAP" id="MF_01207">
    <property type="entry name" value="MsrQ"/>
    <property type="match status" value="1"/>
</dbReference>
<dbReference type="InterPro" id="IPR013130">
    <property type="entry name" value="Fe3_Rdtase_TM_dom"/>
</dbReference>
<dbReference type="InterPro" id="IPR022837">
    <property type="entry name" value="MsrQ-like"/>
</dbReference>
<dbReference type="NCBIfam" id="NF003831">
    <property type="entry name" value="PRK05419.1-2"/>
    <property type="match status" value="1"/>
</dbReference>
<dbReference type="NCBIfam" id="NF003832">
    <property type="entry name" value="PRK05419.1-4"/>
    <property type="match status" value="1"/>
</dbReference>
<dbReference type="PANTHER" id="PTHR36964">
    <property type="entry name" value="PROTEIN-METHIONINE-SULFOXIDE REDUCTASE HEME-BINDING SUBUNIT MSRQ"/>
    <property type="match status" value="1"/>
</dbReference>
<dbReference type="PANTHER" id="PTHR36964:SF1">
    <property type="entry name" value="PROTEIN-METHIONINE-SULFOXIDE REDUCTASE HEME-BINDING SUBUNIT MSRQ"/>
    <property type="match status" value="1"/>
</dbReference>
<dbReference type="Pfam" id="PF01794">
    <property type="entry name" value="Ferric_reduct"/>
    <property type="match status" value="1"/>
</dbReference>
<gene>
    <name evidence="1" type="primary">msrQ</name>
    <name type="ordered locus">SARI_04255</name>
</gene>
<comment type="function">
    <text evidence="1">Part of the MsrPQ system that repairs oxidized periplasmic proteins containing methionine sulfoxide residues (Met-O), using respiratory chain electrons. Thus protects these proteins from oxidative-stress damage caused by reactive species of oxygen and chlorine generated by the host defense mechanisms. MsrPQ is essential for the maintenance of envelope integrity under bleach stress, rescuing a wide series of structurally unrelated periplasmic proteins from methionine oxidation, including the primary periplasmic chaperone SurA and the lipoprotein Pal. MsrQ provides electrons for reduction to the reductase catalytic subunit MsrP, using the quinone pool of the respiratory chain.</text>
</comment>
<comment type="cofactor">
    <cofactor evidence="1">
        <name>FMN</name>
        <dbReference type="ChEBI" id="CHEBI:58210"/>
    </cofactor>
    <text evidence="1">Binds 1 FMN per subunit.</text>
</comment>
<comment type="cofactor">
    <cofactor evidence="1">
        <name>heme b</name>
        <dbReference type="ChEBI" id="CHEBI:60344"/>
    </cofactor>
    <text evidence="1">Binds 1 heme b (iron(II)-protoporphyrin IX) group per subunit.</text>
</comment>
<comment type="subunit">
    <text evidence="1">Heterodimer of a catalytic subunit (MsrP) and a heme-binding subunit (MsrQ).</text>
</comment>
<comment type="subcellular location">
    <subcellularLocation>
        <location evidence="1">Cell inner membrane</location>
        <topology evidence="1">Multi-pass membrane protein</topology>
    </subcellularLocation>
</comment>
<comment type="similarity">
    <text evidence="1">Belongs to the MsrQ family.</text>
</comment>
<proteinExistence type="inferred from homology"/>
<sequence>MRLTAKQIIWLKVCLHLVGFLPLLWLFWAINQGGLSADPVKDIQHFTGRTALKFLLATLLISPLARYAKQPLLIRTRRLLGLWCFVWATLHLTSYALLELGIHNLALLGSELISRPYLTLGIISWLALLALTLTSTQFAQRKLGKRWQTLHNVVYLVAILAPVHYLWSVKVLSPQPVIYAALALVLLALRYRKFRQWRR</sequence>
<evidence type="ECO:0000255" key="1">
    <source>
        <dbReference type="HAMAP-Rule" id="MF_01207"/>
    </source>
</evidence>
<organism>
    <name type="scientific">Salmonella arizonae (strain ATCC BAA-731 / CDC346-86 / RSK2980)</name>
    <dbReference type="NCBI Taxonomy" id="41514"/>
    <lineage>
        <taxon>Bacteria</taxon>
        <taxon>Pseudomonadati</taxon>
        <taxon>Pseudomonadota</taxon>
        <taxon>Gammaproteobacteria</taxon>
        <taxon>Enterobacterales</taxon>
        <taxon>Enterobacteriaceae</taxon>
        <taxon>Salmonella</taxon>
    </lineage>
</organism>
<reference key="1">
    <citation type="submission" date="2007-11" db="EMBL/GenBank/DDBJ databases">
        <authorList>
            <consortium name="The Salmonella enterica serovar Arizonae Genome Sequencing Project"/>
            <person name="McClelland M."/>
            <person name="Sanderson E.K."/>
            <person name="Porwollik S."/>
            <person name="Spieth J."/>
            <person name="Clifton W.S."/>
            <person name="Fulton R."/>
            <person name="Chunyan W."/>
            <person name="Wollam A."/>
            <person name="Shah N."/>
            <person name="Pepin K."/>
            <person name="Bhonagiri V."/>
            <person name="Nash W."/>
            <person name="Johnson M."/>
            <person name="Thiruvilangam P."/>
            <person name="Wilson R."/>
        </authorList>
    </citation>
    <scope>NUCLEOTIDE SEQUENCE [LARGE SCALE GENOMIC DNA]</scope>
    <source>
        <strain>ATCC BAA-731 / CDC346-86 / RSK2980</strain>
    </source>
</reference>
<keyword id="KW-0997">Cell inner membrane</keyword>
<keyword id="KW-1003">Cell membrane</keyword>
<keyword id="KW-0249">Electron transport</keyword>
<keyword id="KW-0285">Flavoprotein</keyword>
<keyword id="KW-0288">FMN</keyword>
<keyword id="KW-0349">Heme</keyword>
<keyword id="KW-0408">Iron</keyword>
<keyword id="KW-0472">Membrane</keyword>
<keyword id="KW-0479">Metal-binding</keyword>
<keyword id="KW-1185">Reference proteome</keyword>
<keyword id="KW-0812">Transmembrane</keyword>
<keyword id="KW-1133">Transmembrane helix</keyword>
<keyword id="KW-0813">Transport</keyword>
<accession>A9MNV6</accession>